<reference key="1">
    <citation type="journal article" date="2010" name="Genome Biol. Evol.">
        <title>Continuing evolution of Burkholderia mallei through genome reduction and large-scale rearrangements.</title>
        <authorList>
            <person name="Losada L."/>
            <person name="Ronning C.M."/>
            <person name="DeShazer D."/>
            <person name="Woods D."/>
            <person name="Fedorova N."/>
            <person name="Kim H.S."/>
            <person name="Shabalina S.A."/>
            <person name="Pearson T.R."/>
            <person name="Brinkac L."/>
            <person name="Tan P."/>
            <person name="Nandi T."/>
            <person name="Crabtree J."/>
            <person name="Badger J."/>
            <person name="Beckstrom-Sternberg S."/>
            <person name="Saqib M."/>
            <person name="Schutzer S.E."/>
            <person name="Keim P."/>
            <person name="Nierman W.C."/>
        </authorList>
    </citation>
    <scope>NUCLEOTIDE SEQUENCE [LARGE SCALE GENOMIC DNA]</scope>
    <source>
        <strain>NCTC 10247</strain>
    </source>
</reference>
<name>COXX_BURM7</name>
<keyword id="KW-0997">Cell inner membrane</keyword>
<keyword id="KW-1003">Cell membrane</keyword>
<keyword id="KW-0350">Heme biosynthesis</keyword>
<keyword id="KW-0472">Membrane</keyword>
<keyword id="KW-0808">Transferase</keyword>
<keyword id="KW-0812">Transmembrane</keyword>
<keyword id="KW-1133">Transmembrane helix</keyword>
<dbReference type="EC" id="2.5.1.141" evidence="1"/>
<dbReference type="EMBL" id="CP000548">
    <property type="protein sequence ID" value="ABO04183.1"/>
    <property type="molecule type" value="Genomic_DNA"/>
</dbReference>
<dbReference type="SMR" id="A3MQ44"/>
<dbReference type="KEGG" id="bmaz:BM44_480"/>
<dbReference type="KEGG" id="bmn:BMA10247_2859"/>
<dbReference type="PATRIC" id="fig|320389.8.peg.527"/>
<dbReference type="UniPathway" id="UPA00834">
    <property type="reaction ID" value="UER00712"/>
</dbReference>
<dbReference type="GO" id="GO:0005886">
    <property type="term" value="C:plasma membrane"/>
    <property type="evidence" value="ECO:0007669"/>
    <property type="project" value="UniProtKB-SubCell"/>
</dbReference>
<dbReference type="GO" id="GO:0008495">
    <property type="term" value="F:protoheme IX farnesyltransferase activity"/>
    <property type="evidence" value="ECO:0007669"/>
    <property type="project" value="UniProtKB-UniRule"/>
</dbReference>
<dbReference type="GO" id="GO:0048034">
    <property type="term" value="P:heme O biosynthetic process"/>
    <property type="evidence" value="ECO:0007669"/>
    <property type="project" value="UniProtKB-UniRule"/>
</dbReference>
<dbReference type="CDD" id="cd13957">
    <property type="entry name" value="PT_UbiA_Cox10"/>
    <property type="match status" value="1"/>
</dbReference>
<dbReference type="Gene3D" id="1.10.357.140">
    <property type="entry name" value="UbiA prenyltransferase"/>
    <property type="match status" value="1"/>
</dbReference>
<dbReference type="HAMAP" id="MF_00154">
    <property type="entry name" value="CyoE_CtaB"/>
    <property type="match status" value="1"/>
</dbReference>
<dbReference type="InterPro" id="IPR006369">
    <property type="entry name" value="Protohaem_IX_farnesylTrfase"/>
</dbReference>
<dbReference type="InterPro" id="IPR000537">
    <property type="entry name" value="UbiA_prenyltransferase"/>
</dbReference>
<dbReference type="InterPro" id="IPR030470">
    <property type="entry name" value="UbiA_prenylTrfase_CS"/>
</dbReference>
<dbReference type="InterPro" id="IPR044878">
    <property type="entry name" value="UbiA_sf"/>
</dbReference>
<dbReference type="NCBIfam" id="TIGR01473">
    <property type="entry name" value="cyoE_ctaB"/>
    <property type="match status" value="1"/>
</dbReference>
<dbReference type="NCBIfam" id="NF003349">
    <property type="entry name" value="PRK04375.1-2"/>
    <property type="match status" value="1"/>
</dbReference>
<dbReference type="PANTHER" id="PTHR43448:SF7">
    <property type="entry name" value="4-HYDROXYBENZOATE SOLANESYLTRANSFERASE"/>
    <property type="match status" value="1"/>
</dbReference>
<dbReference type="PANTHER" id="PTHR43448">
    <property type="entry name" value="PROTOHEME IX FARNESYLTRANSFERASE, MITOCHONDRIAL"/>
    <property type="match status" value="1"/>
</dbReference>
<dbReference type="Pfam" id="PF01040">
    <property type="entry name" value="UbiA"/>
    <property type="match status" value="1"/>
</dbReference>
<dbReference type="PROSITE" id="PS00943">
    <property type="entry name" value="UBIA"/>
    <property type="match status" value="1"/>
</dbReference>
<sequence>MDTTLSHTPGSRLSQYLALTKPRVTQLAVFCAVIGMFLATPGMVPWKVLLGGTIGIGLLAGSAFAINCLVEQKIDAMMRRTAWRPSARGEITTLQILAFSTVLGGLGAWTLYTFTNPLTIWLTIATFVGYAVIYTLLLKPMTPQNIVIGGASGAMPPALGWAAVTGAVPGDAWILVLIIFVWTPPHFWVLALYRRKDYENAGLPMLPVTHGEQFTRLHILLYTVILFAVTMMPFISGMSGAVYLTSAVLLGALFLAYAWKIYRDYSDALARRAFRYSIVYLSLLFAALLVDHYARPVIGM</sequence>
<organism>
    <name type="scientific">Burkholderia mallei (strain NCTC 10247)</name>
    <dbReference type="NCBI Taxonomy" id="320389"/>
    <lineage>
        <taxon>Bacteria</taxon>
        <taxon>Pseudomonadati</taxon>
        <taxon>Pseudomonadota</taxon>
        <taxon>Betaproteobacteria</taxon>
        <taxon>Burkholderiales</taxon>
        <taxon>Burkholderiaceae</taxon>
        <taxon>Burkholderia</taxon>
        <taxon>pseudomallei group</taxon>
    </lineage>
</organism>
<accession>A3MQ44</accession>
<feature type="chain" id="PRO_0000327026" description="Protoheme IX farnesyltransferase">
    <location>
        <begin position="1"/>
        <end position="300"/>
    </location>
</feature>
<feature type="transmembrane region" description="Helical" evidence="1">
    <location>
        <begin position="24"/>
        <end position="44"/>
    </location>
</feature>
<feature type="transmembrane region" description="Helical" evidence="1">
    <location>
        <begin position="48"/>
        <end position="68"/>
    </location>
</feature>
<feature type="transmembrane region" description="Helical" evidence="1">
    <location>
        <begin position="94"/>
        <end position="114"/>
    </location>
</feature>
<feature type="transmembrane region" description="Helical" evidence="1">
    <location>
        <begin position="118"/>
        <end position="138"/>
    </location>
</feature>
<feature type="transmembrane region" description="Helical" evidence="1">
    <location>
        <begin position="146"/>
        <end position="166"/>
    </location>
</feature>
<feature type="transmembrane region" description="Helical" evidence="1">
    <location>
        <begin position="172"/>
        <end position="192"/>
    </location>
</feature>
<feature type="transmembrane region" description="Helical" evidence="1">
    <location>
        <begin position="217"/>
        <end position="237"/>
    </location>
</feature>
<feature type="transmembrane region" description="Helical" evidence="1">
    <location>
        <begin position="239"/>
        <end position="259"/>
    </location>
</feature>
<feature type="transmembrane region" description="Helical" evidence="1">
    <location>
        <begin position="278"/>
        <end position="298"/>
    </location>
</feature>
<comment type="function">
    <text evidence="1">Converts heme B (protoheme IX) to heme O by substitution of the vinyl group on carbon 2 of heme B porphyrin ring with a hydroxyethyl farnesyl side group.</text>
</comment>
<comment type="catalytic activity">
    <reaction evidence="1">
        <text>heme b + (2E,6E)-farnesyl diphosphate + H2O = Fe(II)-heme o + diphosphate</text>
        <dbReference type="Rhea" id="RHEA:28070"/>
        <dbReference type="ChEBI" id="CHEBI:15377"/>
        <dbReference type="ChEBI" id="CHEBI:33019"/>
        <dbReference type="ChEBI" id="CHEBI:60344"/>
        <dbReference type="ChEBI" id="CHEBI:60530"/>
        <dbReference type="ChEBI" id="CHEBI:175763"/>
        <dbReference type="EC" id="2.5.1.141"/>
    </reaction>
</comment>
<comment type="pathway">
    <text evidence="1">Porphyrin-containing compound metabolism; heme O biosynthesis; heme O from protoheme: step 1/1.</text>
</comment>
<comment type="subcellular location">
    <subcellularLocation>
        <location evidence="1">Cell inner membrane</location>
        <topology evidence="1">Multi-pass membrane protein</topology>
    </subcellularLocation>
</comment>
<comment type="miscellaneous">
    <text evidence="1">Carbon 2 of the heme B porphyrin ring is defined according to the Fischer nomenclature.</text>
</comment>
<comment type="similarity">
    <text evidence="1">Belongs to the UbiA prenyltransferase family. Protoheme IX farnesyltransferase subfamily.</text>
</comment>
<evidence type="ECO:0000255" key="1">
    <source>
        <dbReference type="HAMAP-Rule" id="MF_00154"/>
    </source>
</evidence>
<gene>
    <name evidence="1" type="primary">ctaB</name>
    <name type="ordered locus">BMA10247_2859</name>
</gene>
<protein>
    <recommendedName>
        <fullName evidence="1">Protoheme IX farnesyltransferase</fullName>
        <ecNumber evidence="1">2.5.1.141</ecNumber>
    </recommendedName>
    <alternativeName>
        <fullName evidence="1">Heme B farnesyltransferase</fullName>
    </alternativeName>
    <alternativeName>
        <fullName evidence="1">Heme O synthase</fullName>
    </alternativeName>
</protein>
<proteinExistence type="inferred from homology"/>